<sequence>MKASSGRCGLVRWLQVLLPFLLSLFPGALPVQIRYSIPEELAKNSVVGNLAKDLGLSVRDLPARKLRVSAEKEYFTVNPESGDLLVSDRIDREQICGKQPLCVLDFDTVAENPLNIFYIAVIVQDINDNTPLFKQTKINLKIGESTKPGTTFPLDPALDSDVGPNSLQRYHLNDNEYFDLAEKQTPDGRKYPELILKHSLDREEHSLHQLVLTAVDGGDPPQSGTTQIRIKVTDANDNPPVFSQDVYRVTLREDVPPGFFVLQVTATDRDEGINAEITYSFHNVDEQVKHFFNLNEKTGEITTKDDLDFEIASSYTLSIEAKDPGDLAAHCSIQVEILDDNDCAPEVIVTSVSTPLPEDSPPGTVIALIKTRDRDSGENGEVYCQVLGNAKFILKSSSKNYYKLVTDGALDREEIPEYNLTITATDGGKPPLSSSIIVTLHISDVNDNAPVFQQTSYMVHVAENNPPGASIAQISASDPDLGPSGQVSYSIVASDLKPREILSYVSVSAQSGVVFAQRAFDHEQLRAFELTLQARDQGSPALSANVSLRVLVGDLNDNAPRVLYPALGPDGSALFDMVPRAAEPGYLVTKVVAVDADSGHNAWLSYHVLQASEPGLFSLGLRTGEVRTARALGDRDAARQRLLVAVRDGGQPPLSATATLHLIFADSLQEVLPDLSDRREPSDPQAKLQFYLVVALALISVLFFLAVILAISLRLRLSSRSDAWDCFQPGLSSKPGPGVLPNYSEGTLPYSYNLCVASQSAKTEFNFLNITPELVPAQDLVCDNASWEQNTNHGAAGVPFASDTILKQAPPNTDWRFSQAQRPGTSGSQNGDDTGTWPNNQFDTEMLQAMILASASEAADGSSTLGGGAGTMGLSARYGPQFTLQHVPDYRQNVYIPGSNATLTNAAGKRDGKAPAGGNGNKKKSGKKEKK</sequence>
<organism>
    <name type="scientific">Homo sapiens</name>
    <name type="common">Human</name>
    <dbReference type="NCBI Taxonomy" id="9606"/>
    <lineage>
        <taxon>Eukaryota</taxon>
        <taxon>Metazoa</taxon>
        <taxon>Chordata</taxon>
        <taxon>Craniata</taxon>
        <taxon>Vertebrata</taxon>
        <taxon>Euteleostomi</taxon>
        <taxon>Mammalia</taxon>
        <taxon>Eutheria</taxon>
        <taxon>Euarchontoglires</taxon>
        <taxon>Primates</taxon>
        <taxon>Haplorrhini</taxon>
        <taxon>Catarrhini</taxon>
        <taxon>Hominidae</taxon>
        <taxon>Homo</taxon>
    </lineage>
</organism>
<dbReference type="EMBL" id="AF152331">
    <property type="protein sequence ID" value="AAD43725.1"/>
    <property type="molecule type" value="mRNA"/>
</dbReference>
<dbReference type="EMBL" id="AF152518">
    <property type="protein sequence ID" value="AAD43778.1"/>
    <property type="molecule type" value="mRNA"/>
</dbReference>
<dbReference type="EMBL" id="CH471062">
    <property type="protein sequence ID" value="EAW61939.1"/>
    <property type="molecule type" value="Genomic_DNA"/>
</dbReference>
<dbReference type="EMBL" id="BC101805">
    <property type="protein sequence ID" value="AAI01806.1"/>
    <property type="molecule type" value="mRNA"/>
</dbReference>
<dbReference type="CCDS" id="CCDS54924.1">
    <molecule id="Q9Y5G2-1"/>
</dbReference>
<dbReference type="CCDS" id="CCDS75332.1">
    <molecule id="Q9Y5G2-2"/>
</dbReference>
<dbReference type="RefSeq" id="NP_061746.1">
    <molecule id="Q9Y5G2-1"/>
    <property type="nucleotide sequence ID" value="NM_018923.3"/>
</dbReference>
<dbReference type="RefSeq" id="NP_115267.1">
    <molecule id="Q9Y5G2-2"/>
    <property type="nucleotide sequence ID" value="NM_032096.1"/>
</dbReference>
<dbReference type="SMR" id="Q9Y5G2"/>
<dbReference type="BioGRID" id="121043">
    <property type="interactions" value="43"/>
</dbReference>
<dbReference type="FunCoup" id="Q9Y5G2">
    <property type="interactions" value="73"/>
</dbReference>
<dbReference type="IntAct" id="Q9Y5G2">
    <property type="interactions" value="43"/>
</dbReference>
<dbReference type="STRING" id="9606.ENSP00000429018"/>
<dbReference type="GlyConnect" id="1687">
    <property type="glycosylation" value="4 N-Linked glycans (1 site)"/>
</dbReference>
<dbReference type="GlyCosmos" id="Q9Y5G2">
    <property type="glycosylation" value="2 sites, 3 glycans"/>
</dbReference>
<dbReference type="GlyGen" id="Q9Y5G2">
    <property type="glycosylation" value="2 sites, 3 N-linked glycans (1 site)"/>
</dbReference>
<dbReference type="iPTMnet" id="Q9Y5G2"/>
<dbReference type="PhosphoSitePlus" id="Q9Y5G2"/>
<dbReference type="SwissPalm" id="Q9Y5G2"/>
<dbReference type="BioMuta" id="PCDHGB2"/>
<dbReference type="DMDM" id="37999832"/>
<dbReference type="jPOST" id="Q9Y5G2"/>
<dbReference type="MassIVE" id="Q9Y5G2"/>
<dbReference type="PaxDb" id="9606-ENSP00000429018"/>
<dbReference type="PeptideAtlas" id="Q9Y5G2"/>
<dbReference type="ProteomicsDB" id="86365">
    <molecule id="Q9Y5G2-1"/>
</dbReference>
<dbReference type="ProteomicsDB" id="86366">
    <molecule id="Q9Y5G2-2"/>
</dbReference>
<dbReference type="Antibodypedia" id="56127">
    <property type="antibodies" value="182 antibodies from 19 providers"/>
</dbReference>
<dbReference type="DNASU" id="56103"/>
<dbReference type="Ensembl" id="ENST00000522605.2">
    <molecule id="Q9Y5G2-1"/>
    <property type="protein sequence ID" value="ENSP00000429018.1"/>
    <property type="gene ID" value="ENSG00000253910.3"/>
</dbReference>
<dbReference type="Ensembl" id="ENST00000622527.1">
    <molecule id="Q9Y5G2-2"/>
    <property type="protein sequence ID" value="ENSP00000481512.1"/>
    <property type="gene ID" value="ENSG00000253910.3"/>
</dbReference>
<dbReference type="GeneID" id="56103"/>
<dbReference type="KEGG" id="hsa:56103"/>
<dbReference type="MANE-Select" id="ENST00000522605.2">
    <property type="protein sequence ID" value="ENSP00000429018.1"/>
    <property type="RefSeq nucleotide sequence ID" value="NM_018923.3"/>
    <property type="RefSeq protein sequence ID" value="NP_061746.1"/>
</dbReference>
<dbReference type="UCSC" id="uc003ljs.3">
    <molecule id="Q9Y5G2-1"/>
    <property type="organism name" value="human"/>
</dbReference>
<dbReference type="AGR" id="HGNC:8709"/>
<dbReference type="CTD" id="56103"/>
<dbReference type="DisGeNET" id="56103"/>
<dbReference type="GeneCards" id="PCDHGB2"/>
<dbReference type="HGNC" id="HGNC:8709">
    <property type="gene designation" value="PCDHGB2"/>
</dbReference>
<dbReference type="HPA" id="ENSG00000253910">
    <property type="expression patterns" value="Low tissue specificity"/>
</dbReference>
<dbReference type="MalaCards" id="PCDHGB2"/>
<dbReference type="MIM" id="604968">
    <property type="type" value="gene"/>
</dbReference>
<dbReference type="MIM" id="606300">
    <property type="type" value="gene"/>
</dbReference>
<dbReference type="neXtProt" id="NX_Q9Y5G2"/>
<dbReference type="OpenTargets" id="ENSG00000253910"/>
<dbReference type="PharmGKB" id="PA33057"/>
<dbReference type="VEuPathDB" id="HostDB:ENSG00000253910"/>
<dbReference type="eggNOG" id="KOG3594">
    <property type="taxonomic scope" value="Eukaryota"/>
</dbReference>
<dbReference type="GeneTree" id="ENSGT00940000165388"/>
<dbReference type="HOGENOM" id="CLU_006480_3_0_1"/>
<dbReference type="InParanoid" id="Q9Y5G2"/>
<dbReference type="OMA" id="CGKKPLC"/>
<dbReference type="OrthoDB" id="6252479at2759"/>
<dbReference type="PAN-GO" id="Q9Y5G2">
    <property type="GO annotations" value="2 GO annotations based on evolutionary models"/>
</dbReference>
<dbReference type="PhylomeDB" id="Q9Y5G2"/>
<dbReference type="TreeFam" id="TF332299"/>
<dbReference type="PathwayCommons" id="Q9Y5G2"/>
<dbReference type="SignaLink" id="Q9Y5G2"/>
<dbReference type="SIGNOR" id="Q9Y5G2"/>
<dbReference type="BioGRID-ORCS" id="56103">
    <property type="hits" value="11 hits in 1096 CRISPR screens"/>
</dbReference>
<dbReference type="GenomeRNAi" id="56103"/>
<dbReference type="Pharos" id="Q9Y5G2">
    <property type="development level" value="Tdark"/>
</dbReference>
<dbReference type="PRO" id="PR:Q9Y5G2"/>
<dbReference type="Proteomes" id="UP000005640">
    <property type="component" value="Chromosome 5"/>
</dbReference>
<dbReference type="RNAct" id="Q9Y5G2">
    <property type="molecule type" value="protein"/>
</dbReference>
<dbReference type="Bgee" id="ENSG00000253910">
    <property type="expression patterns" value="Expressed in cortical plate and 102 other cell types or tissues"/>
</dbReference>
<dbReference type="GO" id="GO:0005886">
    <property type="term" value="C:plasma membrane"/>
    <property type="evidence" value="ECO:0000318"/>
    <property type="project" value="GO_Central"/>
</dbReference>
<dbReference type="GO" id="GO:0005509">
    <property type="term" value="F:calcium ion binding"/>
    <property type="evidence" value="ECO:0007669"/>
    <property type="project" value="InterPro"/>
</dbReference>
<dbReference type="GO" id="GO:0007155">
    <property type="term" value="P:cell adhesion"/>
    <property type="evidence" value="ECO:0000318"/>
    <property type="project" value="GO_Central"/>
</dbReference>
<dbReference type="GO" id="GO:0007156">
    <property type="term" value="P:homophilic cell adhesion via plasma membrane adhesion molecules"/>
    <property type="evidence" value="ECO:0007669"/>
    <property type="project" value="InterPro"/>
</dbReference>
<dbReference type="GO" id="GO:0007399">
    <property type="term" value="P:nervous system development"/>
    <property type="evidence" value="ECO:0007669"/>
    <property type="project" value="UniProtKB-ARBA"/>
</dbReference>
<dbReference type="CDD" id="cd11304">
    <property type="entry name" value="Cadherin_repeat"/>
    <property type="match status" value="6"/>
</dbReference>
<dbReference type="FunFam" id="2.60.40.60:FF:000004">
    <property type="entry name" value="Protocadherin 1 gamma 2"/>
    <property type="match status" value="1"/>
</dbReference>
<dbReference type="FunFam" id="2.60.40.60:FF:000001">
    <property type="entry name" value="Protocadherin alpha 2"/>
    <property type="match status" value="1"/>
</dbReference>
<dbReference type="FunFam" id="2.60.40.60:FF:000002">
    <property type="entry name" value="Protocadherin alpha 2"/>
    <property type="match status" value="1"/>
</dbReference>
<dbReference type="FunFam" id="2.60.40.60:FF:000006">
    <property type="entry name" value="Protocadherin alpha 2"/>
    <property type="match status" value="1"/>
</dbReference>
<dbReference type="FunFam" id="2.60.40.60:FF:000129">
    <property type="entry name" value="protocadherin alpha-C2 isoform X1"/>
    <property type="match status" value="1"/>
</dbReference>
<dbReference type="FunFam" id="2.60.40.60:FF:000018">
    <property type="entry name" value="Protocadherin gamma c3"/>
    <property type="match status" value="1"/>
</dbReference>
<dbReference type="Gene3D" id="2.60.40.60">
    <property type="entry name" value="Cadherins"/>
    <property type="match status" value="6"/>
</dbReference>
<dbReference type="InterPro" id="IPR002126">
    <property type="entry name" value="Cadherin-like_dom"/>
</dbReference>
<dbReference type="InterPro" id="IPR015919">
    <property type="entry name" value="Cadherin-like_sf"/>
</dbReference>
<dbReference type="InterPro" id="IPR032455">
    <property type="entry name" value="Cadherin_C"/>
</dbReference>
<dbReference type="InterPro" id="IPR031904">
    <property type="entry name" value="Cadherin_CBD"/>
</dbReference>
<dbReference type="InterPro" id="IPR020894">
    <property type="entry name" value="Cadherin_CS"/>
</dbReference>
<dbReference type="InterPro" id="IPR013164">
    <property type="entry name" value="Cadherin_N"/>
</dbReference>
<dbReference type="InterPro" id="IPR050174">
    <property type="entry name" value="Protocadherin/Cadherin-CA"/>
</dbReference>
<dbReference type="PANTHER" id="PTHR24028">
    <property type="entry name" value="CADHERIN-87A"/>
    <property type="match status" value="1"/>
</dbReference>
<dbReference type="PANTHER" id="PTHR24028:SF144">
    <property type="entry name" value="PROTOCADHERIN GAMMA-B2"/>
    <property type="match status" value="1"/>
</dbReference>
<dbReference type="Pfam" id="PF00028">
    <property type="entry name" value="Cadherin"/>
    <property type="match status" value="5"/>
</dbReference>
<dbReference type="Pfam" id="PF08266">
    <property type="entry name" value="Cadherin_2"/>
    <property type="match status" value="1"/>
</dbReference>
<dbReference type="Pfam" id="PF16492">
    <property type="entry name" value="Cadherin_C_2"/>
    <property type="match status" value="1"/>
</dbReference>
<dbReference type="Pfam" id="PF15974">
    <property type="entry name" value="Cadherin_tail"/>
    <property type="match status" value="1"/>
</dbReference>
<dbReference type="PRINTS" id="PR00205">
    <property type="entry name" value="CADHERIN"/>
</dbReference>
<dbReference type="SMART" id="SM00112">
    <property type="entry name" value="CA"/>
    <property type="match status" value="6"/>
</dbReference>
<dbReference type="SUPFAM" id="SSF49313">
    <property type="entry name" value="Cadherin-like"/>
    <property type="match status" value="6"/>
</dbReference>
<dbReference type="PROSITE" id="PS00232">
    <property type="entry name" value="CADHERIN_1"/>
    <property type="match status" value="4"/>
</dbReference>
<dbReference type="PROSITE" id="PS50268">
    <property type="entry name" value="CADHERIN_2"/>
    <property type="match status" value="6"/>
</dbReference>
<protein>
    <recommendedName>
        <fullName>Protocadherin gamma-B2</fullName>
        <shortName>PCDH-gamma-B2</shortName>
    </recommendedName>
</protein>
<name>PCDGE_HUMAN</name>
<comment type="function">
    <text>Potential calcium-dependent cell-adhesion protein. May be involved in the establishment and maintenance of specific neuronal connections in the brain.</text>
</comment>
<comment type="subcellular location">
    <subcellularLocation>
        <location evidence="1">Cell membrane</location>
        <topology evidence="1">Single-pass type I membrane protein</topology>
    </subcellularLocation>
</comment>
<comment type="alternative products">
    <event type="alternative splicing"/>
    <isoform>
        <id>Q9Y5G2-1</id>
        <name>1</name>
        <sequence type="displayed"/>
    </isoform>
    <isoform>
        <id>Q9Y5G2-2</id>
        <name>2</name>
        <name>Short</name>
        <sequence type="described" ref="VSP_008686 VSP_008687"/>
    </isoform>
</comment>
<accession>Q9Y5G2</accession>
<accession>Q3MIJ3</accession>
<accession>Q9UN65</accession>
<gene>
    <name type="primary">PCDHGB2</name>
</gene>
<reference key="1">
    <citation type="journal article" date="1999" name="Cell">
        <title>A striking organization of a large family of human neural cadherin-like cell adhesion genes.</title>
        <authorList>
            <person name="Wu Q."/>
            <person name="Maniatis T."/>
        </authorList>
    </citation>
    <scope>NUCLEOTIDE SEQUENCE [MRNA] (ISOFORMS 1 AND 2)</scope>
    <source>
        <tissue>Brain</tissue>
    </source>
</reference>
<reference key="2">
    <citation type="submission" date="2005-09" db="EMBL/GenBank/DDBJ databases">
        <authorList>
            <person name="Mural R.J."/>
            <person name="Istrail S."/>
            <person name="Sutton G.G."/>
            <person name="Florea L."/>
            <person name="Halpern A.L."/>
            <person name="Mobarry C.M."/>
            <person name="Lippert R."/>
            <person name="Walenz B."/>
            <person name="Shatkay H."/>
            <person name="Dew I."/>
            <person name="Miller J.R."/>
            <person name="Flanigan M.J."/>
            <person name="Edwards N.J."/>
            <person name="Bolanos R."/>
            <person name="Fasulo D."/>
            <person name="Halldorsson B.V."/>
            <person name="Hannenhalli S."/>
            <person name="Turner R."/>
            <person name="Yooseph S."/>
            <person name="Lu F."/>
            <person name="Nusskern D.R."/>
            <person name="Shue B.C."/>
            <person name="Zheng X.H."/>
            <person name="Zhong F."/>
            <person name="Delcher A.L."/>
            <person name="Huson D.H."/>
            <person name="Kravitz S.A."/>
            <person name="Mouchard L."/>
            <person name="Reinert K."/>
            <person name="Remington K.A."/>
            <person name="Clark A.G."/>
            <person name="Waterman M.S."/>
            <person name="Eichler E.E."/>
            <person name="Adams M.D."/>
            <person name="Hunkapiller M.W."/>
            <person name="Myers E.W."/>
            <person name="Venter J.C."/>
        </authorList>
    </citation>
    <scope>NUCLEOTIDE SEQUENCE [LARGE SCALE GENOMIC DNA]</scope>
</reference>
<reference key="3">
    <citation type="journal article" date="2004" name="Genome Res.">
        <title>The status, quality, and expansion of the NIH full-length cDNA project: the Mammalian Gene Collection (MGC).</title>
        <authorList>
            <consortium name="The MGC Project Team"/>
        </authorList>
    </citation>
    <scope>NUCLEOTIDE SEQUENCE [LARGE SCALE MRNA] (ISOFORM 2)</scope>
    <source>
        <tissue>Brain</tissue>
    </source>
</reference>
<feature type="signal peptide" evidence="2">
    <location>
        <begin position="1"/>
        <end position="30"/>
    </location>
</feature>
<feature type="chain" id="PRO_0000003974" description="Protocadherin gamma-B2">
    <location>
        <begin position="31"/>
        <end position="931"/>
    </location>
</feature>
<feature type="topological domain" description="Extracellular" evidence="2">
    <location>
        <begin position="31"/>
        <end position="691"/>
    </location>
</feature>
<feature type="transmembrane region" description="Helical" evidence="2">
    <location>
        <begin position="692"/>
        <end position="712"/>
    </location>
</feature>
<feature type="topological domain" description="Cytoplasmic" evidence="2">
    <location>
        <begin position="713"/>
        <end position="931"/>
    </location>
</feature>
<feature type="domain" description="Cadherin 1" evidence="3">
    <location>
        <begin position="31"/>
        <end position="133"/>
    </location>
</feature>
<feature type="domain" description="Cadherin 2" evidence="3">
    <location>
        <begin position="134"/>
        <end position="242"/>
    </location>
</feature>
<feature type="domain" description="Cadherin 3" evidence="3">
    <location>
        <begin position="243"/>
        <end position="347"/>
    </location>
</feature>
<feature type="domain" description="Cadherin 4" evidence="3">
    <location>
        <begin position="348"/>
        <end position="452"/>
    </location>
</feature>
<feature type="domain" description="Cadherin 5" evidence="3">
    <location>
        <begin position="453"/>
        <end position="562"/>
    </location>
</feature>
<feature type="domain" description="Cadherin 6" evidence="3">
    <location>
        <begin position="570"/>
        <end position="675"/>
    </location>
</feature>
<feature type="region of interest" description="Disordered" evidence="4">
    <location>
        <begin position="814"/>
        <end position="840"/>
    </location>
</feature>
<feature type="region of interest" description="Disordered" evidence="4">
    <location>
        <begin position="901"/>
        <end position="931"/>
    </location>
</feature>
<feature type="compositionally biased region" description="Polar residues" evidence="4">
    <location>
        <begin position="815"/>
        <end position="840"/>
    </location>
</feature>
<feature type="compositionally biased region" description="Basic residues" evidence="4">
    <location>
        <begin position="921"/>
        <end position="931"/>
    </location>
</feature>
<feature type="glycosylation site" description="N-linked (GlcNAc...) asparagine" evidence="2">
    <location>
        <position position="419"/>
    </location>
</feature>
<feature type="glycosylation site" description="N-linked (GlcNAc...) asparagine" evidence="2">
    <location>
        <position position="545"/>
    </location>
</feature>
<feature type="splice variant" id="VSP_008686" description="In isoform 2." evidence="5 6">
    <original>QAPP</original>
    <variation>VSFN</variation>
    <location>
        <begin position="808"/>
        <end position="811"/>
    </location>
</feature>
<feature type="splice variant" id="VSP_008687" description="In isoform 2." evidence="5 6">
    <location>
        <begin position="812"/>
        <end position="931"/>
    </location>
</feature>
<feature type="sequence variant" id="VAR_048568" description="In dbSNP:rs17097231.">
    <original>P</original>
    <variation>R</variation>
    <location>
        <position position="26"/>
    </location>
</feature>
<feature type="sequence variant" id="VAR_061071" description="In dbSNP:rs13171859.">
    <original>V</original>
    <variation>I</variation>
    <location>
        <position position="58"/>
    </location>
</feature>
<feature type="sequence variant" id="VAR_061072" description="In dbSNP:rs57735633.">
    <original>K</original>
    <variation>E</variation>
    <location>
        <position position="687"/>
    </location>
</feature>
<proteinExistence type="evidence at protein level"/>
<evidence type="ECO:0000250" key="1"/>
<evidence type="ECO:0000255" key="2"/>
<evidence type="ECO:0000255" key="3">
    <source>
        <dbReference type="PROSITE-ProRule" id="PRU00043"/>
    </source>
</evidence>
<evidence type="ECO:0000256" key="4">
    <source>
        <dbReference type="SAM" id="MobiDB-lite"/>
    </source>
</evidence>
<evidence type="ECO:0000303" key="5">
    <source>
    </source>
</evidence>
<evidence type="ECO:0000303" key="6">
    <source>
    </source>
</evidence>
<keyword id="KW-0025">Alternative splicing</keyword>
<keyword id="KW-0106">Calcium</keyword>
<keyword id="KW-0130">Cell adhesion</keyword>
<keyword id="KW-1003">Cell membrane</keyword>
<keyword id="KW-0325">Glycoprotein</keyword>
<keyword id="KW-0472">Membrane</keyword>
<keyword id="KW-1267">Proteomics identification</keyword>
<keyword id="KW-1185">Reference proteome</keyword>
<keyword id="KW-0677">Repeat</keyword>
<keyword id="KW-0732">Signal</keyword>
<keyword id="KW-0812">Transmembrane</keyword>
<keyword id="KW-1133">Transmembrane helix</keyword>